<protein>
    <recommendedName>
        <fullName evidence="3">Small ribosomal subunit protein eS17</fullName>
    </recommendedName>
    <alternativeName>
        <fullName>40S ribosomal protein S17</fullName>
    </alternativeName>
</protein>
<sequence length="135" mass="15524">MGRVRTKTVKKAARVIIEKYYTRLGNDFHTNKRVCEEIAIIPSKKLRNKIAGYVTHLMKRIQRGPVRGISIKLQEEERERRDNYVPEVSALDQEIIEVDPDTKEMLKLLDFGSLSNLQVTQPTVGMNFKTPRGAV</sequence>
<reference key="1">
    <citation type="journal article" date="1994" name="Biochem. Genet.">
        <title>The nucleotide sequence of a cDNA clone encoding ribosomal protein S17 of Ehrlich ascites carcinoma cells.</title>
        <authorList>
            <person name="Karasaki Y."/>
            <person name="Satoh Y."/>
            <person name="Ohji T."/>
            <person name="Tsukamoto S."/>
            <person name="Higashi K."/>
            <person name="Gotoh S."/>
            <person name="Mizusaki K."/>
        </authorList>
    </citation>
    <scope>NUCLEOTIDE SEQUENCE [MRNA]</scope>
    <source>
        <strain>ddY</strain>
    </source>
</reference>
<reference key="2">
    <citation type="journal article" date="2005" name="Science">
        <title>The transcriptional landscape of the mammalian genome.</title>
        <authorList>
            <person name="Carninci P."/>
            <person name="Kasukawa T."/>
            <person name="Katayama S."/>
            <person name="Gough J."/>
            <person name="Frith M.C."/>
            <person name="Maeda N."/>
            <person name="Oyama R."/>
            <person name="Ravasi T."/>
            <person name="Lenhard B."/>
            <person name="Wells C."/>
            <person name="Kodzius R."/>
            <person name="Shimokawa K."/>
            <person name="Bajic V.B."/>
            <person name="Brenner S.E."/>
            <person name="Batalov S."/>
            <person name="Forrest A.R."/>
            <person name="Zavolan M."/>
            <person name="Davis M.J."/>
            <person name="Wilming L.G."/>
            <person name="Aidinis V."/>
            <person name="Allen J.E."/>
            <person name="Ambesi-Impiombato A."/>
            <person name="Apweiler R."/>
            <person name="Aturaliya R.N."/>
            <person name="Bailey T.L."/>
            <person name="Bansal M."/>
            <person name="Baxter L."/>
            <person name="Beisel K.W."/>
            <person name="Bersano T."/>
            <person name="Bono H."/>
            <person name="Chalk A.M."/>
            <person name="Chiu K.P."/>
            <person name="Choudhary V."/>
            <person name="Christoffels A."/>
            <person name="Clutterbuck D.R."/>
            <person name="Crowe M.L."/>
            <person name="Dalla E."/>
            <person name="Dalrymple B.P."/>
            <person name="de Bono B."/>
            <person name="Della Gatta G."/>
            <person name="di Bernardo D."/>
            <person name="Down T."/>
            <person name="Engstrom P."/>
            <person name="Fagiolini M."/>
            <person name="Faulkner G."/>
            <person name="Fletcher C.F."/>
            <person name="Fukushima T."/>
            <person name="Furuno M."/>
            <person name="Futaki S."/>
            <person name="Gariboldi M."/>
            <person name="Georgii-Hemming P."/>
            <person name="Gingeras T.R."/>
            <person name="Gojobori T."/>
            <person name="Green R.E."/>
            <person name="Gustincich S."/>
            <person name="Harbers M."/>
            <person name="Hayashi Y."/>
            <person name="Hensch T.K."/>
            <person name="Hirokawa N."/>
            <person name="Hill D."/>
            <person name="Huminiecki L."/>
            <person name="Iacono M."/>
            <person name="Ikeo K."/>
            <person name="Iwama A."/>
            <person name="Ishikawa T."/>
            <person name="Jakt M."/>
            <person name="Kanapin A."/>
            <person name="Katoh M."/>
            <person name="Kawasawa Y."/>
            <person name="Kelso J."/>
            <person name="Kitamura H."/>
            <person name="Kitano H."/>
            <person name="Kollias G."/>
            <person name="Krishnan S.P."/>
            <person name="Kruger A."/>
            <person name="Kummerfeld S.K."/>
            <person name="Kurochkin I.V."/>
            <person name="Lareau L.F."/>
            <person name="Lazarevic D."/>
            <person name="Lipovich L."/>
            <person name="Liu J."/>
            <person name="Liuni S."/>
            <person name="McWilliam S."/>
            <person name="Madan Babu M."/>
            <person name="Madera M."/>
            <person name="Marchionni L."/>
            <person name="Matsuda H."/>
            <person name="Matsuzawa S."/>
            <person name="Miki H."/>
            <person name="Mignone F."/>
            <person name="Miyake S."/>
            <person name="Morris K."/>
            <person name="Mottagui-Tabar S."/>
            <person name="Mulder N."/>
            <person name="Nakano N."/>
            <person name="Nakauchi H."/>
            <person name="Ng P."/>
            <person name="Nilsson R."/>
            <person name="Nishiguchi S."/>
            <person name="Nishikawa S."/>
            <person name="Nori F."/>
            <person name="Ohara O."/>
            <person name="Okazaki Y."/>
            <person name="Orlando V."/>
            <person name="Pang K.C."/>
            <person name="Pavan W.J."/>
            <person name="Pavesi G."/>
            <person name="Pesole G."/>
            <person name="Petrovsky N."/>
            <person name="Piazza S."/>
            <person name="Reed J."/>
            <person name="Reid J.F."/>
            <person name="Ring B.Z."/>
            <person name="Ringwald M."/>
            <person name="Rost B."/>
            <person name="Ruan Y."/>
            <person name="Salzberg S.L."/>
            <person name="Sandelin A."/>
            <person name="Schneider C."/>
            <person name="Schoenbach C."/>
            <person name="Sekiguchi K."/>
            <person name="Semple C.A."/>
            <person name="Seno S."/>
            <person name="Sessa L."/>
            <person name="Sheng Y."/>
            <person name="Shibata Y."/>
            <person name="Shimada H."/>
            <person name="Shimada K."/>
            <person name="Silva D."/>
            <person name="Sinclair B."/>
            <person name="Sperling S."/>
            <person name="Stupka E."/>
            <person name="Sugiura K."/>
            <person name="Sultana R."/>
            <person name="Takenaka Y."/>
            <person name="Taki K."/>
            <person name="Tammoja K."/>
            <person name="Tan S.L."/>
            <person name="Tang S."/>
            <person name="Taylor M.S."/>
            <person name="Tegner J."/>
            <person name="Teichmann S.A."/>
            <person name="Ueda H.R."/>
            <person name="van Nimwegen E."/>
            <person name="Verardo R."/>
            <person name="Wei C.L."/>
            <person name="Yagi K."/>
            <person name="Yamanishi H."/>
            <person name="Zabarovsky E."/>
            <person name="Zhu S."/>
            <person name="Zimmer A."/>
            <person name="Hide W."/>
            <person name="Bult C."/>
            <person name="Grimmond S.M."/>
            <person name="Teasdale R.D."/>
            <person name="Liu E.T."/>
            <person name="Brusic V."/>
            <person name="Quackenbush J."/>
            <person name="Wahlestedt C."/>
            <person name="Mattick J.S."/>
            <person name="Hume D.A."/>
            <person name="Kai C."/>
            <person name="Sasaki D."/>
            <person name="Tomaru Y."/>
            <person name="Fukuda S."/>
            <person name="Kanamori-Katayama M."/>
            <person name="Suzuki M."/>
            <person name="Aoki J."/>
            <person name="Arakawa T."/>
            <person name="Iida J."/>
            <person name="Imamura K."/>
            <person name="Itoh M."/>
            <person name="Kato T."/>
            <person name="Kawaji H."/>
            <person name="Kawagashira N."/>
            <person name="Kawashima T."/>
            <person name="Kojima M."/>
            <person name="Kondo S."/>
            <person name="Konno H."/>
            <person name="Nakano K."/>
            <person name="Ninomiya N."/>
            <person name="Nishio T."/>
            <person name="Okada M."/>
            <person name="Plessy C."/>
            <person name="Shibata K."/>
            <person name="Shiraki T."/>
            <person name="Suzuki S."/>
            <person name="Tagami M."/>
            <person name="Waki K."/>
            <person name="Watahiki A."/>
            <person name="Okamura-Oho Y."/>
            <person name="Suzuki H."/>
            <person name="Kawai J."/>
            <person name="Hayashizaki Y."/>
        </authorList>
    </citation>
    <scope>NUCLEOTIDE SEQUENCE [LARGE SCALE MRNA]</scope>
    <source>
        <strain>C57BL/6J</strain>
        <tissue>Pancreas</tissue>
    </source>
</reference>
<reference key="3">
    <citation type="journal article" date="2004" name="Genome Res.">
        <title>The status, quality, and expansion of the NIH full-length cDNA project: the Mammalian Gene Collection (MGC).</title>
        <authorList>
            <consortium name="The MGC Project Team"/>
        </authorList>
    </citation>
    <scope>NUCLEOTIDE SEQUENCE [LARGE SCALE MRNA]</scope>
    <source>
        <strain>C57BL/6J</strain>
        <tissue>Brain</tissue>
        <tissue>Mammary tumor</tissue>
    </source>
</reference>
<reference key="4">
    <citation type="journal article" date="2004" name="Mol. Cell. Proteomics">
        <title>Phosphoproteomic analysis of the developing mouse brain.</title>
        <authorList>
            <person name="Ballif B.A."/>
            <person name="Villen J."/>
            <person name="Beausoleil S.A."/>
            <person name="Schwartz D."/>
            <person name="Gygi S.P."/>
        </authorList>
    </citation>
    <scope>IDENTIFICATION BY MASS SPECTROMETRY [LARGE SCALE ANALYSIS]</scope>
    <source>
        <tissue>Embryonic brain</tissue>
    </source>
</reference>
<reference key="5">
    <citation type="journal article" date="2009" name="Mol. Cell. Proteomics">
        <title>Large scale localization of protein phosphorylation by use of electron capture dissociation mass spectrometry.</title>
        <authorList>
            <person name="Sweet S.M."/>
            <person name="Bailey C.M."/>
            <person name="Cunningham D.L."/>
            <person name="Heath J.K."/>
            <person name="Cooper H.J."/>
        </authorList>
    </citation>
    <scope>IDENTIFICATION BY MASS SPECTROMETRY [LARGE SCALE ANALYSIS]</scope>
    <source>
        <tissue>Embryonic fibroblast</tissue>
    </source>
</reference>
<reference key="6">
    <citation type="journal article" date="2010" name="Cell">
        <title>A tissue-specific atlas of mouse protein phosphorylation and expression.</title>
        <authorList>
            <person name="Huttlin E.L."/>
            <person name="Jedrychowski M.P."/>
            <person name="Elias J.E."/>
            <person name="Goswami T."/>
            <person name="Rad R."/>
            <person name="Beausoleil S.A."/>
            <person name="Villen J."/>
            <person name="Haas W."/>
            <person name="Sowa M.E."/>
            <person name="Gygi S.P."/>
        </authorList>
    </citation>
    <scope>PHOSPHORYLATION [LARGE SCALE ANALYSIS] AT SER-113</scope>
    <scope>IDENTIFICATION BY MASS SPECTROMETRY [LARGE SCALE ANALYSIS]</scope>
    <source>
        <tissue>Brain</tissue>
        <tissue>Brown adipose tissue</tissue>
        <tissue>Heart</tissue>
        <tissue>Kidney</tissue>
        <tissue>Liver</tissue>
        <tissue>Lung</tissue>
        <tissue>Pancreas</tissue>
        <tissue>Spleen</tissue>
        <tissue>Testis</tissue>
    </source>
</reference>
<reference key="7">
    <citation type="journal article" date="2013" name="Mol. Cell">
        <title>SIRT5-mediated lysine desuccinylation impacts diverse metabolic pathways.</title>
        <authorList>
            <person name="Park J."/>
            <person name="Chen Y."/>
            <person name="Tishkoff D.X."/>
            <person name="Peng C."/>
            <person name="Tan M."/>
            <person name="Dai L."/>
            <person name="Xie Z."/>
            <person name="Zhang Y."/>
            <person name="Zwaans B.M."/>
            <person name="Skinner M.E."/>
            <person name="Lombard D.B."/>
            <person name="Zhao Y."/>
        </authorList>
    </citation>
    <scope>SUCCINYLATION [LARGE SCALE ANALYSIS] AT LYS-19</scope>
    <scope>IDENTIFICATION BY MASS SPECTROMETRY [LARGE SCALE ANALYSIS]</scope>
    <source>
        <tissue>Embryonic fibroblast</tissue>
    </source>
</reference>
<reference evidence="4 5" key="8">
    <citation type="journal article" date="2022" name="Nature">
        <title>A male germ-cell-specific ribosome controls male fertility.</title>
        <authorList>
            <person name="Li H."/>
            <person name="Huo Y."/>
            <person name="He X."/>
            <person name="Yao L."/>
            <person name="Zhang H."/>
            <person name="Cui Y."/>
            <person name="Xiao H."/>
            <person name="Xie W."/>
            <person name="Zhang D."/>
            <person name="Wang Y."/>
            <person name="Zhang S."/>
            <person name="Tu H."/>
            <person name="Cheng Y."/>
            <person name="Guo Y."/>
            <person name="Cao X."/>
            <person name="Zhu Y."/>
            <person name="Jiang T."/>
            <person name="Guo X."/>
            <person name="Qin Y."/>
            <person name="Sha J."/>
        </authorList>
    </citation>
    <scope>STRUCTURE BY ELECTRON MICROSCOPY (3.03 ANGSTROMS) OF RIBOSOME</scope>
    <scope>FUNCTION</scope>
    <scope>SUBUNIT</scope>
    <scope>SUBCELLULAR LOCATION</scope>
</reference>
<feature type="chain" id="PRO_0000141526" description="Small ribosomal subunit protein eS17">
    <location>
        <begin position="1"/>
        <end position="135"/>
    </location>
</feature>
<feature type="modified residue" description="N6-succinyllysine" evidence="7">
    <location>
        <position position="19"/>
    </location>
</feature>
<feature type="modified residue" description="Phosphoserine" evidence="6">
    <location>
        <position position="113"/>
    </location>
</feature>
<feature type="modified residue" description="Phosphothreonine" evidence="1">
    <location>
        <position position="130"/>
    </location>
</feature>
<feature type="cross-link" description="Glycyl lysine isopeptide (Lys-Gly) (interchain with G-Cter in SUMO1); alternate" evidence="1">
    <location>
        <position position="103"/>
    </location>
</feature>
<feature type="cross-link" description="Glycyl lysine isopeptide (Lys-Gly) (interchain with G-Cter in SUMO2); alternate" evidence="1">
    <location>
        <position position="103"/>
    </location>
</feature>
<dbReference type="EMBL" id="D25213">
    <property type="protein sequence ID" value="BAA04943.1"/>
    <property type="molecule type" value="mRNA"/>
</dbReference>
<dbReference type="EMBL" id="AK007992">
    <property type="protein sequence ID" value="BAB25394.1"/>
    <property type="molecule type" value="mRNA"/>
</dbReference>
<dbReference type="EMBL" id="AK010647">
    <property type="protein sequence ID" value="BAB27087.1"/>
    <property type="molecule type" value="mRNA"/>
</dbReference>
<dbReference type="EMBL" id="BC002044">
    <property type="status" value="NOT_ANNOTATED_CDS"/>
    <property type="molecule type" value="mRNA"/>
</dbReference>
<dbReference type="EMBL" id="BC081466">
    <property type="protein sequence ID" value="AAH81466.1"/>
    <property type="molecule type" value="mRNA"/>
</dbReference>
<dbReference type="CCDS" id="CCDS40006.1"/>
<dbReference type="RefSeq" id="NP_033118.1">
    <property type="nucleotide sequence ID" value="NM_009092.3"/>
</dbReference>
<dbReference type="PDB" id="7CPU">
    <property type="method" value="EM"/>
    <property type="resolution" value="2.82 A"/>
    <property type="chains" value="SR=1-135"/>
</dbReference>
<dbReference type="PDB" id="7CPV">
    <property type="method" value="EM"/>
    <property type="resolution" value="3.03 A"/>
    <property type="chains" value="SR=1-135"/>
</dbReference>
<dbReference type="PDB" id="7LS1">
    <property type="method" value="EM"/>
    <property type="resolution" value="3.30 A"/>
    <property type="chains" value="z2=1-135"/>
</dbReference>
<dbReference type="PDB" id="7LS2">
    <property type="method" value="EM"/>
    <property type="resolution" value="3.10 A"/>
    <property type="chains" value="z2=1-135"/>
</dbReference>
<dbReference type="PDBsum" id="7CPU"/>
<dbReference type="PDBsum" id="7CPV"/>
<dbReference type="PDBsum" id="7LS1"/>
<dbReference type="PDBsum" id="7LS2"/>
<dbReference type="EMDB" id="EMD-23500"/>
<dbReference type="EMDB" id="EMD-23501"/>
<dbReference type="EMDB" id="EMD-30432"/>
<dbReference type="EMDB" id="EMD-30433"/>
<dbReference type="SMR" id="P63276"/>
<dbReference type="BioGRID" id="203005">
    <property type="interactions" value="97"/>
</dbReference>
<dbReference type="ComplexPortal" id="CPX-5261">
    <property type="entry name" value="40S cytosolic small ribosomal subunit"/>
</dbReference>
<dbReference type="FunCoup" id="P63276">
    <property type="interactions" value="2179"/>
</dbReference>
<dbReference type="IntAct" id="P63276">
    <property type="interactions" value="2"/>
</dbReference>
<dbReference type="STRING" id="10090.ENSMUSP00000079628"/>
<dbReference type="GlyGen" id="P63276">
    <property type="glycosylation" value="1 site, 1 O-linked glycan (1 site)"/>
</dbReference>
<dbReference type="iPTMnet" id="P63276"/>
<dbReference type="MetOSite" id="P63276"/>
<dbReference type="PhosphoSitePlus" id="P63276"/>
<dbReference type="SwissPalm" id="P63276"/>
<dbReference type="jPOST" id="P63276"/>
<dbReference type="PaxDb" id="10090-ENSMUSP00000079628"/>
<dbReference type="PeptideAtlas" id="P63276"/>
<dbReference type="Pumba" id="P63276"/>
<dbReference type="TopDownProteomics" id="P63276"/>
<dbReference type="Antibodypedia" id="56676">
    <property type="antibodies" value="148 antibodies from 26 providers"/>
</dbReference>
<dbReference type="DNASU" id="20068"/>
<dbReference type="Ensembl" id="ENSMUST00000080813.5">
    <property type="protein sequence ID" value="ENSMUSP00000079628.5"/>
    <property type="gene ID" value="ENSMUSG00000061787.16"/>
</dbReference>
<dbReference type="GeneID" id="20068"/>
<dbReference type="KEGG" id="mmu:20068"/>
<dbReference type="UCSC" id="uc009ibv.1">
    <property type="organism name" value="mouse"/>
</dbReference>
<dbReference type="AGR" id="MGI:1309526"/>
<dbReference type="CTD" id="6218"/>
<dbReference type="MGI" id="MGI:1309526">
    <property type="gene designation" value="Rps17"/>
</dbReference>
<dbReference type="VEuPathDB" id="HostDB:ENSMUSG00000061787"/>
<dbReference type="eggNOG" id="KOG0187">
    <property type="taxonomic scope" value="Eukaryota"/>
</dbReference>
<dbReference type="GeneTree" id="ENSGT00390000006548"/>
<dbReference type="HOGENOM" id="CLU_112958_1_1_1"/>
<dbReference type="InParanoid" id="P63276"/>
<dbReference type="OMA" id="HTEHIEV"/>
<dbReference type="OrthoDB" id="1727351at2759"/>
<dbReference type="PhylomeDB" id="P63276"/>
<dbReference type="TreeFam" id="TF317992"/>
<dbReference type="Reactome" id="R-MMU-156827">
    <property type="pathway name" value="L13a-mediated translational silencing of Ceruloplasmin expression"/>
</dbReference>
<dbReference type="Reactome" id="R-MMU-1799339">
    <property type="pathway name" value="SRP-dependent cotranslational protein targeting to membrane"/>
</dbReference>
<dbReference type="Reactome" id="R-MMU-6791226">
    <property type="pathway name" value="Major pathway of rRNA processing in the nucleolus and cytosol"/>
</dbReference>
<dbReference type="Reactome" id="R-MMU-72649">
    <property type="pathway name" value="Translation initiation complex formation"/>
</dbReference>
<dbReference type="Reactome" id="R-MMU-72689">
    <property type="pathway name" value="Formation of a pool of free 40S subunits"/>
</dbReference>
<dbReference type="Reactome" id="R-MMU-72695">
    <property type="pathway name" value="Formation of the ternary complex, and subsequently, the 43S complex"/>
</dbReference>
<dbReference type="Reactome" id="R-MMU-72702">
    <property type="pathway name" value="Ribosomal scanning and start codon recognition"/>
</dbReference>
<dbReference type="Reactome" id="R-MMU-72706">
    <property type="pathway name" value="GTP hydrolysis and joining of the 60S ribosomal subunit"/>
</dbReference>
<dbReference type="Reactome" id="R-MMU-975956">
    <property type="pathway name" value="Nonsense Mediated Decay (NMD) independent of the Exon Junction Complex (EJC)"/>
</dbReference>
<dbReference type="Reactome" id="R-MMU-975957">
    <property type="pathway name" value="Nonsense Mediated Decay (NMD) enhanced by the Exon Junction Complex (EJC)"/>
</dbReference>
<dbReference type="BioGRID-ORCS" id="20068">
    <property type="hits" value="27 hits in 61 CRISPR screens"/>
</dbReference>
<dbReference type="CD-CODE" id="CE726F99">
    <property type="entry name" value="Postsynaptic density"/>
</dbReference>
<dbReference type="ChiTaRS" id="Rps17">
    <property type="organism name" value="mouse"/>
</dbReference>
<dbReference type="PRO" id="PR:P63276"/>
<dbReference type="Proteomes" id="UP000000589">
    <property type="component" value="Chromosome 7"/>
</dbReference>
<dbReference type="RNAct" id="P63276">
    <property type="molecule type" value="protein"/>
</dbReference>
<dbReference type="Bgee" id="ENSMUSG00000061787">
    <property type="expression patterns" value="Expressed in ectoplacental cone and 195 other cell types or tissues"/>
</dbReference>
<dbReference type="ExpressionAtlas" id="P63276">
    <property type="expression patterns" value="baseline and differential"/>
</dbReference>
<dbReference type="GO" id="GO:0005737">
    <property type="term" value="C:cytoplasm"/>
    <property type="evidence" value="ECO:0000303"/>
    <property type="project" value="ComplexPortal"/>
</dbReference>
<dbReference type="GO" id="GO:0005829">
    <property type="term" value="C:cytosol"/>
    <property type="evidence" value="ECO:0000304"/>
    <property type="project" value="Reactome"/>
</dbReference>
<dbReference type="GO" id="GO:0022627">
    <property type="term" value="C:cytosolic small ribosomal subunit"/>
    <property type="evidence" value="ECO:0000314"/>
    <property type="project" value="UniProtKB"/>
</dbReference>
<dbReference type="GO" id="GO:0005730">
    <property type="term" value="C:nucleolus"/>
    <property type="evidence" value="ECO:0007669"/>
    <property type="project" value="UniProtKB-SubCell"/>
</dbReference>
<dbReference type="GO" id="GO:0098794">
    <property type="term" value="C:postsynapse"/>
    <property type="evidence" value="ECO:0000303"/>
    <property type="project" value="SynGO"/>
</dbReference>
<dbReference type="GO" id="GO:0005840">
    <property type="term" value="C:ribosome"/>
    <property type="evidence" value="ECO:0000303"/>
    <property type="project" value="SynGO"/>
</dbReference>
<dbReference type="GO" id="GO:0032040">
    <property type="term" value="C:small-subunit processome"/>
    <property type="evidence" value="ECO:0000250"/>
    <property type="project" value="UniProtKB"/>
</dbReference>
<dbReference type="GO" id="GO:0045202">
    <property type="term" value="C:synapse"/>
    <property type="evidence" value="ECO:0000314"/>
    <property type="project" value="SynGO"/>
</dbReference>
<dbReference type="GO" id="GO:0003735">
    <property type="term" value="F:structural constituent of ribosome"/>
    <property type="evidence" value="ECO:0000314"/>
    <property type="project" value="UniProtKB"/>
</dbReference>
<dbReference type="GO" id="GO:0002181">
    <property type="term" value="P:cytoplasmic translation"/>
    <property type="evidence" value="ECO:0000303"/>
    <property type="project" value="ComplexPortal"/>
</dbReference>
<dbReference type="GO" id="GO:0042274">
    <property type="term" value="P:ribosomal small subunit biogenesis"/>
    <property type="evidence" value="ECO:0000250"/>
    <property type="project" value="UniProtKB"/>
</dbReference>
<dbReference type="GO" id="GO:0006412">
    <property type="term" value="P:translation"/>
    <property type="evidence" value="ECO:0000266"/>
    <property type="project" value="MGI"/>
</dbReference>
<dbReference type="FunFam" id="1.10.60.20:FF:000001">
    <property type="entry name" value="40S ribosomal protein S17"/>
    <property type="match status" value="1"/>
</dbReference>
<dbReference type="Gene3D" id="1.10.60.20">
    <property type="entry name" value="Ribosomal protein S17e-like"/>
    <property type="match status" value="1"/>
</dbReference>
<dbReference type="HAMAP" id="MF_00511">
    <property type="entry name" value="Ribosomal_eS17"/>
    <property type="match status" value="1"/>
</dbReference>
<dbReference type="InterPro" id="IPR001210">
    <property type="entry name" value="Ribosomal_eS17"/>
</dbReference>
<dbReference type="InterPro" id="IPR018273">
    <property type="entry name" value="Ribosomal_eS17_CS"/>
</dbReference>
<dbReference type="InterPro" id="IPR036401">
    <property type="entry name" value="Ribosomal_eS17_sf"/>
</dbReference>
<dbReference type="NCBIfam" id="NF002242">
    <property type="entry name" value="PRK01151.1"/>
    <property type="match status" value="1"/>
</dbReference>
<dbReference type="PANTHER" id="PTHR10732">
    <property type="entry name" value="40S RIBOSOMAL PROTEIN S17"/>
    <property type="match status" value="1"/>
</dbReference>
<dbReference type="PANTHER" id="PTHR10732:SF0">
    <property type="entry name" value="40S RIBOSOMAL PROTEIN S17"/>
    <property type="match status" value="1"/>
</dbReference>
<dbReference type="Pfam" id="PF00833">
    <property type="entry name" value="Ribosomal_S17e"/>
    <property type="match status" value="1"/>
</dbReference>
<dbReference type="SUPFAM" id="SSF116820">
    <property type="entry name" value="Rps17e-like"/>
    <property type="match status" value="1"/>
</dbReference>
<dbReference type="PROSITE" id="PS00712">
    <property type="entry name" value="RIBOSOMAL_S17E"/>
    <property type="match status" value="1"/>
</dbReference>
<evidence type="ECO:0000250" key="1">
    <source>
        <dbReference type="UniProtKB" id="P08708"/>
    </source>
</evidence>
<evidence type="ECO:0000269" key="2">
    <source>
    </source>
</evidence>
<evidence type="ECO:0000305" key="3"/>
<evidence type="ECO:0007744" key="4">
    <source>
        <dbReference type="PDB" id="7CPU"/>
    </source>
</evidence>
<evidence type="ECO:0007744" key="5">
    <source>
        <dbReference type="PDB" id="7CPV"/>
    </source>
</evidence>
<evidence type="ECO:0007744" key="6">
    <source>
    </source>
</evidence>
<evidence type="ECO:0007744" key="7">
    <source>
    </source>
</evidence>
<name>RS17_MOUSE</name>
<organism>
    <name type="scientific">Mus musculus</name>
    <name type="common">Mouse</name>
    <dbReference type="NCBI Taxonomy" id="10090"/>
    <lineage>
        <taxon>Eukaryota</taxon>
        <taxon>Metazoa</taxon>
        <taxon>Chordata</taxon>
        <taxon>Craniata</taxon>
        <taxon>Vertebrata</taxon>
        <taxon>Euteleostomi</taxon>
        <taxon>Mammalia</taxon>
        <taxon>Eutheria</taxon>
        <taxon>Euarchontoglires</taxon>
        <taxon>Glires</taxon>
        <taxon>Rodentia</taxon>
        <taxon>Myomorpha</taxon>
        <taxon>Muroidea</taxon>
        <taxon>Muridae</taxon>
        <taxon>Murinae</taxon>
        <taxon>Mus</taxon>
        <taxon>Mus</taxon>
    </lineage>
</organism>
<proteinExistence type="evidence at protein level"/>
<keyword id="KW-0002">3D-structure</keyword>
<keyword id="KW-0963">Cytoplasm</keyword>
<keyword id="KW-1017">Isopeptide bond</keyword>
<keyword id="KW-0539">Nucleus</keyword>
<keyword id="KW-0597">Phosphoprotein</keyword>
<keyword id="KW-1185">Reference proteome</keyword>
<keyword id="KW-0687">Ribonucleoprotein</keyword>
<keyword id="KW-0689">Ribosomal protein</keyword>
<keyword id="KW-0832">Ubl conjugation</keyword>
<comment type="function">
    <text evidence="1 2">Component of the small ribosomal subunit (PubMed:36517592). The ribosome is a large ribonucleoprotein complex responsible for the synthesis of proteins in the cell (PubMed:36517592). Part of the small subunit (SSU) processome, first precursor of the small eukaryotic ribosomal subunit. During the assembly of the SSU processome in the nucleolus, many ribosome biogenesis factors, an RNA chaperone and ribosomal proteins associate with the nascent pre-rRNA and work in concert to generate RNA folding, modifications, rearrangements and cleavage as well as targeted degradation of pre-ribosomal RNA by the RNA exosome (By similarity).</text>
</comment>
<comment type="subunit">
    <text evidence="1 2">Component of the small ribosomal subunit (PubMed:36517592). Part of the small subunit (SSU) processome, composed of more than 70 proteins and the RNA chaperone small nucleolar RNA (snoRNA) U3 (By similarity).</text>
</comment>
<comment type="subcellular location">
    <subcellularLocation>
        <location evidence="2">Cytoplasm</location>
    </subcellularLocation>
    <subcellularLocation>
        <location evidence="1">Nucleus</location>
        <location evidence="1">Nucleolus</location>
    </subcellularLocation>
</comment>
<comment type="PTM">
    <text evidence="1">Ubiquitinated at Lys-103 by RNF14 and RNF25 in response to ribosome collisions (ribosome stalling).</text>
</comment>
<comment type="similarity">
    <text evidence="3">Belongs to the eukaryotic ribosomal protein eS17 family.</text>
</comment>
<accession>P63276</accession>
<accession>P06584</accession>
<gene>
    <name type="primary">Rps17</name>
</gene>